<proteinExistence type="inferred from homology"/>
<organism>
    <name type="scientific">Corynebacterium efficiens (strain DSM 44549 / YS-314 / AJ 12310 / JCM 11189 / NBRC 100395)</name>
    <dbReference type="NCBI Taxonomy" id="196164"/>
    <lineage>
        <taxon>Bacteria</taxon>
        <taxon>Bacillati</taxon>
        <taxon>Actinomycetota</taxon>
        <taxon>Actinomycetes</taxon>
        <taxon>Mycobacteriales</taxon>
        <taxon>Corynebacteriaceae</taxon>
        <taxon>Corynebacterium</taxon>
    </lineage>
</organism>
<protein>
    <recommendedName>
        <fullName evidence="1">UPF0182 protein CE0802</fullName>
    </recommendedName>
</protein>
<name>Y802_COREF</name>
<comment type="subcellular location">
    <subcellularLocation>
        <location evidence="1">Cell membrane</location>
        <topology evidence="1">Multi-pass membrane protein</topology>
    </subcellularLocation>
</comment>
<comment type="similarity">
    <text evidence="1">Belongs to the UPF0182 family.</text>
</comment>
<comment type="sequence caution" evidence="3">
    <conflict type="erroneous initiation">
        <sequence resource="EMBL-CDS" id="BAC17612"/>
    </conflict>
</comment>
<evidence type="ECO:0000255" key="1">
    <source>
        <dbReference type="HAMAP-Rule" id="MF_01600"/>
    </source>
</evidence>
<evidence type="ECO:0000256" key="2">
    <source>
        <dbReference type="SAM" id="MobiDB-lite"/>
    </source>
</evidence>
<evidence type="ECO:0000305" key="3"/>
<reference key="1">
    <citation type="journal article" date="2003" name="Genome Res.">
        <title>Comparative complete genome sequence analysis of the amino acid replacements responsible for the thermostability of Corynebacterium efficiens.</title>
        <authorList>
            <person name="Nishio Y."/>
            <person name="Nakamura Y."/>
            <person name="Kawarabayasi Y."/>
            <person name="Usuda Y."/>
            <person name="Kimura E."/>
            <person name="Sugimoto S."/>
            <person name="Matsui K."/>
            <person name="Yamagishi A."/>
            <person name="Kikuchi H."/>
            <person name="Ikeo K."/>
            <person name="Gojobori T."/>
        </authorList>
    </citation>
    <scope>NUCLEOTIDE SEQUENCE [LARGE SCALE GENOMIC DNA]</scope>
    <source>
        <strain>DSM 44549 / YS-314 / AJ 12310 / JCM 11189 / NBRC 100395</strain>
    </source>
</reference>
<dbReference type="EMBL" id="BA000035">
    <property type="protein sequence ID" value="BAC17612.1"/>
    <property type="status" value="ALT_INIT"/>
    <property type="molecule type" value="Genomic_DNA"/>
</dbReference>
<dbReference type="RefSeq" id="WP_006769515.1">
    <property type="nucleotide sequence ID" value="NC_004369.1"/>
</dbReference>
<dbReference type="SMR" id="Q8FRF9"/>
<dbReference type="STRING" id="196164.gene:10741204"/>
<dbReference type="KEGG" id="cef:CE0802"/>
<dbReference type="eggNOG" id="COG1615">
    <property type="taxonomic scope" value="Bacteria"/>
</dbReference>
<dbReference type="HOGENOM" id="CLU_007733_1_0_11"/>
<dbReference type="OrthoDB" id="9763654at2"/>
<dbReference type="Proteomes" id="UP000001409">
    <property type="component" value="Chromosome"/>
</dbReference>
<dbReference type="GO" id="GO:0005576">
    <property type="term" value="C:extracellular region"/>
    <property type="evidence" value="ECO:0007669"/>
    <property type="project" value="TreeGrafter"/>
</dbReference>
<dbReference type="GO" id="GO:0005886">
    <property type="term" value="C:plasma membrane"/>
    <property type="evidence" value="ECO:0007669"/>
    <property type="project" value="UniProtKB-SubCell"/>
</dbReference>
<dbReference type="HAMAP" id="MF_01600">
    <property type="entry name" value="UPF0182"/>
    <property type="match status" value="1"/>
</dbReference>
<dbReference type="InterPro" id="IPR005372">
    <property type="entry name" value="UPF0182"/>
</dbReference>
<dbReference type="NCBIfam" id="NF000825">
    <property type="entry name" value="PRK00068.1"/>
    <property type="match status" value="1"/>
</dbReference>
<dbReference type="PANTHER" id="PTHR39344">
    <property type="entry name" value="UPF0182 PROTEIN SLL1060"/>
    <property type="match status" value="1"/>
</dbReference>
<dbReference type="PANTHER" id="PTHR39344:SF1">
    <property type="entry name" value="UPF0182 PROTEIN SLL1060"/>
    <property type="match status" value="1"/>
</dbReference>
<dbReference type="Pfam" id="PF03699">
    <property type="entry name" value="UPF0182"/>
    <property type="match status" value="1"/>
</dbReference>
<gene>
    <name type="ordered locus">CE0802</name>
</gene>
<sequence length="996" mass="110086">MATGLTPPPQPIKRPPKAVTWIIGIIALLVLVTPLTVGFYTDWLWFGEVDYRGVFSTVIVTRIILFIVFALLAGFVTWLAGYFTIRLRPDDLTAFDAESPVFQYRQMIENSLRRILIIVPIFVGLLGGLVGQRSWQTVQLFLNREPFGVEDQQFGMDYGFYAFTLPMLRLITSSLSTLLVVAFIIALVGHYLLGGIRPGNQMTGQKAFISRGARAQLAVTAGLWMLVRVATYWLERYDLLTRENATFTGAGYTDINAHLPAKIILMVISIIVAVAFFSAIFLRDLRIPGLAVVLLVLSSVVVGAVWPLMLERFSVQPNRAEKESEYISRNIESTRFAYGITDDEVTYIENWGAGGATNAEVAADEATISNIRLLDPQILSPTFTQQQQLRNFYGFPEQLAMDRYEVDGELRDFVVAARELDPNSLQQNQQDWINRHTVYTHGNGFIAAQANQVDEVARDVGSTRGGYPVYTVSDLQTNARAAESEDAEELGIMVEQPRIYYGPLIASAADGKDYAIVGDTGDGPVEYDTDSTSYTYDGEGGVGIGNLFNRAAFALRYQEMNMILSDRVGSESKILFERDPRTRVEKVAPWLTTDSKSYPAVIDGSIKWIVDGYTTLSSLPYATRTSLTEATLDSVVVDNFQQPLLTEEVGYIRNSVKAVVDAYDGTVELYEFDSEDPVLKAWRGVFPDVVQPESEISNELRDHLRYPEDMFKVQREMLSRYHVEDAGTFFTNDAFWSVPNDPTAPEGRQEMKQPPYYVVAADPDTGESSFQLITPFRGLQREFLSAHMTASSDPDNFGKITVRVLPTGAVTQGPKQAQDAMMSSDQVAQDQTLWRGSNDLFNGNLLTLPVGGGEILYVEPIYSQRRDQESAFPKLLRMLVFYKGQVGYAPTIAEALSQVGIDPAAAQDIEVVEEDGTVTVPDVNATEDADATTDGEDETPAAPAAPAGSEAEGIEAINEALRNLEAARDGSFEEYGRALDALDRAVESYQGAGTAE</sequence>
<keyword id="KW-1003">Cell membrane</keyword>
<keyword id="KW-0472">Membrane</keyword>
<keyword id="KW-1185">Reference proteome</keyword>
<keyword id="KW-0812">Transmembrane</keyword>
<keyword id="KW-1133">Transmembrane helix</keyword>
<accession>Q8FRF9</accession>
<feature type="chain" id="PRO_0000291277" description="UPF0182 protein CE0802">
    <location>
        <begin position="1"/>
        <end position="996"/>
    </location>
</feature>
<feature type="transmembrane region" description="Helical" evidence="1">
    <location>
        <begin position="19"/>
        <end position="39"/>
    </location>
</feature>
<feature type="transmembrane region" description="Helical" evidence="1">
    <location>
        <begin position="63"/>
        <end position="83"/>
    </location>
</feature>
<feature type="transmembrane region" description="Helical" evidence="1">
    <location>
        <begin position="115"/>
        <end position="135"/>
    </location>
</feature>
<feature type="transmembrane region" description="Helical" evidence="1">
    <location>
        <begin position="176"/>
        <end position="196"/>
    </location>
</feature>
<feature type="transmembrane region" description="Helical" evidence="1">
    <location>
        <begin position="212"/>
        <end position="234"/>
    </location>
</feature>
<feature type="transmembrane region" description="Helical" evidence="1">
    <location>
        <begin position="262"/>
        <end position="282"/>
    </location>
</feature>
<feature type="transmembrane region" description="Helical" evidence="1">
    <location>
        <begin position="290"/>
        <end position="310"/>
    </location>
</feature>
<feature type="region of interest" description="Disordered" evidence="2">
    <location>
        <begin position="920"/>
        <end position="950"/>
    </location>
</feature>
<feature type="compositionally biased region" description="Acidic residues" evidence="2">
    <location>
        <begin position="925"/>
        <end position="939"/>
    </location>
</feature>
<feature type="compositionally biased region" description="Low complexity" evidence="2">
    <location>
        <begin position="940"/>
        <end position="950"/>
    </location>
</feature>